<keyword id="KW-0067">ATP-binding</keyword>
<keyword id="KW-0315">Glutamine amidotransferase</keyword>
<keyword id="KW-0332">GMP biosynthesis</keyword>
<keyword id="KW-0436">Ligase</keyword>
<keyword id="KW-0547">Nucleotide-binding</keyword>
<keyword id="KW-0658">Purine biosynthesis</keyword>
<keyword id="KW-1185">Reference proteome</keyword>
<proteinExistence type="inferred from homology"/>
<dbReference type="EC" id="6.3.5.2" evidence="1"/>
<dbReference type="EMBL" id="CP000462">
    <property type="protein sequence ID" value="ABK36969.1"/>
    <property type="molecule type" value="Genomic_DNA"/>
</dbReference>
<dbReference type="RefSeq" id="WP_011705860.1">
    <property type="nucleotide sequence ID" value="NC_008570.1"/>
</dbReference>
<dbReference type="RefSeq" id="YP_856521.1">
    <property type="nucleotide sequence ID" value="NC_008570.1"/>
</dbReference>
<dbReference type="SMR" id="A0KJS0"/>
<dbReference type="STRING" id="380703.AHA_1990"/>
<dbReference type="EnsemblBacteria" id="ABK36969">
    <property type="protein sequence ID" value="ABK36969"/>
    <property type="gene ID" value="AHA_1990"/>
</dbReference>
<dbReference type="GeneID" id="4489436"/>
<dbReference type="KEGG" id="aha:AHA_1990"/>
<dbReference type="PATRIC" id="fig|380703.7.peg.2011"/>
<dbReference type="eggNOG" id="COG0518">
    <property type="taxonomic scope" value="Bacteria"/>
</dbReference>
<dbReference type="eggNOG" id="COG0519">
    <property type="taxonomic scope" value="Bacteria"/>
</dbReference>
<dbReference type="HOGENOM" id="CLU_014340_0_5_6"/>
<dbReference type="OrthoDB" id="9802219at2"/>
<dbReference type="UniPathway" id="UPA00189">
    <property type="reaction ID" value="UER00296"/>
</dbReference>
<dbReference type="Proteomes" id="UP000000756">
    <property type="component" value="Chromosome"/>
</dbReference>
<dbReference type="GO" id="GO:0005829">
    <property type="term" value="C:cytosol"/>
    <property type="evidence" value="ECO:0007669"/>
    <property type="project" value="TreeGrafter"/>
</dbReference>
<dbReference type="GO" id="GO:0005524">
    <property type="term" value="F:ATP binding"/>
    <property type="evidence" value="ECO:0007669"/>
    <property type="project" value="UniProtKB-UniRule"/>
</dbReference>
<dbReference type="GO" id="GO:0003921">
    <property type="term" value="F:GMP synthase activity"/>
    <property type="evidence" value="ECO:0007669"/>
    <property type="project" value="InterPro"/>
</dbReference>
<dbReference type="CDD" id="cd01742">
    <property type="entry name" value="GATase1_GMP_Synthase"/>
    <property type="match status" value="1"/>
</dbReference>
<dbReference type="CDD" id="cd01997">
    <property type="entry name" value="GMP_synthase_C"/>
    <property type="match status" value="1"/>
</dbReference>
<dbReference type="FunFam" id="3.30.300.10:FF:000002">
    <property type="entry name" value="GMP synthase [glutamine-hydrolyzing]"/>
    <property type="match status" value="1"/>
</dbReference>
<dbReference type="FunFam" id="3.40.50.620:FF:000001">
    <property type="entry name" value="GMP synthase [glutamine-hydrolyzing]"/>
    <property type="match status" value="1"/>
</dbReference>
<dbReference type="FunFam" id="3.40.50.880:FF:000001">
    <property type="entry name" value="GMP synthase [glutamine-hydrolyzing]"/>
    <property type="match status" value="1"/>
</dbReference>
<dbReference type="Gene3D" id="3.30.300.10">
    <property type="match status" value="1"/>
</dbReference>
<dbReference type="Gene3D" id="3.40.50.880">
    <property type="match status" value="1"/>
</dbReference>
<dbReference type="Gene3D" id="3.40.50.620">
    <property type="entry name" value="HUPs"/>
    <property type="match status" value="1"/>
</dbReference>
<dbReference type="HAMAP" id="MF_00344">
    <property type="entry name" value="GMP_synthase"/>
    <property type="match status" value="1"/>
</dbReference>
<dbReference type="InterPro" id="IPR029062">
    <property type="entry name" value="Class_I_gatase-like"/>
</dbReference>
<dbReference type="InterPro" id="IPR017926">
    <property type="entry name" value="GATASE"/>
</dbReference>
<dbReference type="InterPro" id="IPR001674">
    <property type="entry name" value="GMP_synth_C"/>
</dbReference>
<dbReference type="InterPro" id="IPR004739">
    <property type="entry name" value="GMP_synth_GATase"/>
</dbReference>
<dbReference type="InterPro" id="IPR022955">
    <property type="entry name" value="GMP_synthase"/>
</dbReference>
<dbReference type="InterPro" id="IPR025777">
    <property type="entry name" value="GMPS_ATP_PPase_dom"/>
</dbReference>
<dbReference type="InterPro" id="IPR022310">
    <property type="entry name" value="NAD/GMP_synthase"/>
</dbReference>
<dbReference type="InterPro" id="IPR014729">
    <property type="entry name" value="Rossmann-like_a/b/a_fold"/>
</dbReference>
<dbReference type="NCBIfam" id="TIGR00884">
    <property type="entry name" value="guaA_Cterm"/>
    <property type="match status" value="1"/>
</dbReference>
<dbReference type="NCBIfam" id="TIGR00888">
    <property type="entry name" value="guaA_Nterm"/>
    <property type="match status" value="1"/>
</dbReference>
<dbReference type="NCBIfam" id="NF000848">
    <property type="entry name" value="PRK00074.1"/>
    <property type="match status" value="1"/>
</dbReference>
<dbReference type="PANTHER" id="PTHR11922:SF2">
    <property type="entry name" value="GMP SYNTHASE [GLUTAMINE-HYDROLYZING]"/>
    <property type="match status" value="1"/>
</dbReference>
<dbReference type="PANTHER" id="PTHR11922">
    <property type="entry name" value="GMP SYNTHASE-RELATED"/>
    <property type="match status" value="1"/>
</dbReference>
<dbReference type="Pfam" id="PF00117">
    <property type="entry name" value="GATase"/>
    <property type="match status" value="1"/>
</dbReference>
<dbReference type="Pfam" id="PF00958">
    <property type="entry name" value="GMP_synt_C"/>
    <property type="match status" value="1"/>
</dbReference>
<dbReference type="Pfam" id="PF02540">
    <property type="entry name" value="NAD_synthase"/>
    <property type="match status" value="1"/>
</dbReference>
<dbReference type="PRINTS" id="PR00097">
    <property type="entry name" value="ANTSNTHASEII"/>
</dbReference>
<dbReference type="PRINTS" id="PR00099">
    <property type="entry name" value="CPSGATASE"/>
</dbReference>
<dbReference type="PRINTS" id="PR00096">
    <property type="entry name" value="GATASE"/>
</dbReference>
<dbReference type="SUPFAM" id="SSF52402">
    <property type="entry name" value="Adenine nucleotide alpha hydrolases-like"/>
    <property type="match status" value="1"/>
</dbReference>
<dbReference type="SUPFAM" id="SSF52317">
    <property type="entry name" value="Class I glutamine amidotransferase-like"/>
    <property type="match status" value="1"/>
</dbReference>
<dbReference type="SUPFAM" id="SSF54810">
    <property type="entry name" value="GMP synthetase C-terminal dimerisation domain"/>
    <property type="match status" value="1"/>
</dbReference>
<dbReference type="PROSITE" id="PS51273">
    <property type="entry name" value="GATASE_TYPE_1"/>
    <property type="match status" value="1"/>
</dbReference>
<dbReference type="PROSITE" id="PS51553">
    <property type="entry name" value="GMPS_ATP_PPASE"/>
    <property type="match status" value="1"/>
</dbReference>
<protein>
    <recommendedName>
        <fullName evidence="1">GMP synthase [glutamine-hydrolyzing]</fullName>
        <ecNumber evidence="1">6.3.5.2</ecNumber>
    </recommendedName>
    <alternativeName>
        <fullName evidence="1">GMP synthetase</fullName>
    </alternativeName>
    <alternativeName>
        <fullName evidence="1">Glutamine amidotransferase</fullName>
    </alternativeName>
</protein>
<feature type="chain" id="PRO_1000120203" description="GMP synthase [glutamine-hydrolyzing]">
    <location>
        <begin position="1"/>
        <end position="529"/>
    </location>
</feature>
<feature type="domain" description="Glutamine amidotransferase type-1" evidence="1">
    <location>
        <begin position="9"/>
        <end position="211"/>
    </location>
</feature>
<feature type="domain" description="GMPS ATP-PPase" evidence="1">
    <location>
        <begin position="212"/>
        <end position="404"/>
    </location>
</feature>
<feature type="active site" description="Nucleophile" evidence="1">
    <location>
        <position position="86"/>
    </location>
</feature>
<feature type="active site" evidence="1">
    <location>
        <position position="185"/>
    </location>
</feature>
<feature type="active site" evidence="1">
    <location>
        <position position="187"/>
    </location>
</feature>
<feature type="binding site" evidence="1">
    <location>
        <begin position="239"/>
        <end position="245"/>
    </location>
    <ligand>
        <name>ATP</name>
        <dbReference type="ChEBI" id="CHEBI:30616"/>
    </ligand>
</feature>
<accession>A0KJS0</accession>
<name>GUAA_AERHH</name>
<organism>
    <name type="scientific">Aeromonas hydrophila subsp. hydrophila (strain ATCC 7966 / DSM 30187 / BCRC 13018 / CCUG 14551 / JCM 1027 / KCTC 2358 / NCIMB 9240 / NCTC 8049)</name>
    <dbReference type="NCBI Taxonomy" id="380703"/>
    <lineage>
        <taxon>Bacteria</taxon>
        <taxon>Pseudomonadati</taxon>
        <taxon>Pseudomonadota</taxon>
        <taxon>Gammaproteobacteria</taxon>
        <taxon>Aeromonadales</taxon>
        <taxon>Aeromonadaceae</taxon>
        <taxon>Aeromonas</taxon>
    </lineage>
</organism>
<reference key="1">
    <citation type="journal article" date="2006" name="J. Bacteriol.">
        <title>Genome sequence of Aeromonas hydrophila ATCC 7966T: jack of all trades.</title>
        <authorList>
            <person name="Seshadri R."/>
            <person name="Joseph S.W."/>
            <person name="Chopra A.K."/>
            <person name="Sha J."/>
            <person name="Shaw J."/>
            <person name="Graf J."/>
            <person name="Haft D.H."/>
            <person name="Wu M."/>
            <person name="Ren Q."/>
            <person name="Rosovitz M.J."/>
            <person name="Madupu R."/>
            <person name="Tallon L."/>
            <person name="Kim M."/>
            <person name="Jin S."/>
            <person name="Vuong H."/>
            <person name="Stine O.C."/>
            <person name="Ali A."/>
            <person name="Horneman A.J."/>
            <person name="Heidelberg J.F."/>
        </authorList>
    </citation>
    <scope>NUCLEOTIDE SEQUENCE [LARGE SCALE GENOMIC DNA]</scope>
    <source>
        <strain>ATCC 7966 / DSM 30187 / BCRC 13018 / CCUG 14551 / JCM 1027 / KCTC 2358 / NCIMB 9240 / NCTC 8049</strain>
    </source>
</reference>
<evidence type="ECO:0000255" key="1">
    <source>
        <dbReference type="HAMAP-Rule" id="MF_00344"/>
    </source>
</evidence>
<comment type="function">
    <text evidence="1">Catalyzes the synthesis of GMP from XMP.</text>
</comment>
<comment type="catalytic activity">
    <reaction evidence="1">
        <text>XMP + L-glutamine + ATP + H2O = GMP + L-glutamate + AMP + diphosphate + 2 H(+)</text>
        <dbReference type="Rhea" id="RHEA:11680"/>
        <dbReference type="ChEBI" id="CHEBI:15377"/>
        <dbReference type="ChEBI" id="CHEBI:15378"/>
        <dbReference type="ChEBI" id="CHEBI:29985"/>
        <dbReference type="ChEBI" id="CHEBI:30616"/>
        <dbReference type="ChEBI" id="CHEBI:33019"/>
        <dbReference type="ChEBI" id="CHEBI:57464"/>
        <dbReference type="ChEBI" id="CHEBI:58115"/>
        <dbReference type="ChEBI" id="CHEBI:58359"/>
        <dbReference type="ChEBI" id="CHEBI:456215"/>
        <dbReference type="EC" id="6.3.5.2"/>
    </reaction>
</comment>
<comment type="pathway">
    <text evidence="1">Purine metabolism; GMP biosynthesis; GMP from XMP (L-Gln route): step 1/1.</text>
</comment>
<comment type="subunit">
    <text evidence="1">Homodimer.</text>
</comment>
<sequence>MTKDIHQHRILILDFGSQYTQLIARRVREIGVYCELWAWDVTEEQMREFNPSGIILSGGPESVTEAGSPRAPEYVFNAGVPVFGICYGMQTMAEQLGGKVQSSTEREFGYAKVEVLGNSGKTSALLRNIEDAIADNGNALLDVWMSHGDKVTTIPADFTTIAQTATCPHAAMANEAKRFYGVQFHPEVTHTRQGARMLEHFVKDICGCECLWTPATIIDDAVARIREQVGDDEVILGLSGGVDSSVVAMLVHRAIGDRLTCVFVDNGLLRLNEGQQVMEMFGDHFGLNIVKVDAEERFLSALAGEDEPEAKRKIIGRVFVEVFDDEAKKLKNARWLAQGTIYPDVIESAASKTGKAHVIKSHHNVGGLPEEMKMGLVEPLRELFKDEVRRVGLELGLPYDMLYRHPFPGPGLGVRVLGEVKKEYCDLLRKADAVFIEELRKADLYNQVSQAFAVFLPVRSVGVMGDGRKYDWVIALRAVETIDFMTAHWAHLPYDFLGHVSNRIINEINGISRVVYDVSGKPPATIEWE</sequence>
<gene>
    <name evidence="1" type="primary">guaA</name>
    <name type="ordered locus">AHA_1990</name>
</gene>